<dbReference type="EC" id="5.4.2.11" evidence="1"/>
<dbReference type="EMBL" id="CP001043">
    <property type="protein sequence ID" value="ACC69459.1"/>
    <property type="molecule type" value="Genomic_DNA"/>
</dbReference>
<dbReference type="RefSeq" id="WP_012399687.1">
    <property type="nucleotide sequence ID" value="NC_010622.1"/>
</dbReference>
<dbReference type="SMR" id="B2JC95"/>
<dbReference type="STRING" id="391038.Bphy_0266"/>
<dbReference type="KEGG" id="bph:Bphy_0266"/>
<dbReference type="eggNOG" id="COG0588">
    <property type="taxonomic scope" value="Bacteria"/>
</dbReference>
<dbReference type="HOGENOM" id="CLU_033323_1_1_4"/>
<dbReference type="OrthoDB" id="9781415at2"/>
<dbReference type="UniPathway" id="UPA00109">
    <property type="reaction ID" value="UER00186"/>
</dbReference>
<dbReference type="Proteomes" id="UP000001192">
    <property type="component" value="Chromosome 1"/>
</dbReference>
<dbReference type="GO" id="GO:0004619">
    <property type="term" value="F:phosphoglycerate mutase activity"/>
    <property type="evidence" value="ECO:0007669"/>
    <property type="project" value="UniProtKB-EC"/>
</dbReference>
<dbReference type="GO" id="GO:0006094">
    <property type="term" value="P:gluconeogenesis"/>
    <property type="evidence" value="ECO:0007669"/>
    <property type="project" value="UniProtKB-UniRule"/>
</dbReference>
<dbReference type="GO" id="GO:0006096">
    <property type="term" value="P:glycolytic process"/>
    <property type="evidence" value="ECO:0007669"/>
    <property type="project" value="UniProtKB-UniRule"/>
</dbReference>
<dbReference type="CDD" id="cd07067">
    <property type="entry name" value="HP_PGM_like"/>
    <property type="match status" value="1"/>
</dbReference>
<dbReference type="FunFam" id="3.40.50.1240:FF:000003">
    <property type="entry name" value="2,3-bisphosphoglycerate-dependent phosphoglycerate mutase"/>
    <property type="match status" value="1"/>
</dbReference>
<dbReference type="Gene3D" id="3.40.50.1240">
    <property type="entry name" value="Phosphoglycerate mutase-like"/>
    <property type="match status" value="1"/>
</dbReference>
<dbReference type="HAMAP" id="MF_01039">
    <property type="entry name" value="PGAM_GpmA"/>
    <property type="match status" value="1"/>
</dbReference>
<dbReference type="InterPro" id="IPR013078">
    <property type="entry name" value="His_Pase_superF_clade-1"/>
</dbReference>
<dbReference type="InterPro" id="IPR029033">
    <property type="entry name" value="His_PPase_superfam"/>
</dbReference>
<dbReference type="InterPro" id="IPR001345">
    <property type="entry name" value="PG/BPGM_mutase_AS"/>
</dbReference>
<dbReference type="InterPro" id="IPR005952">
    <property type="entry name" value="Phosphogly_mut1"/>
</dbReference>
<dbReference type="NCBIfam" id="TIGR01258">
    <property type="entry name" value="pgm_1"/>
    <property type="match status" value="1"/>
</dbReference>
<dbReference type="NCBIfam" id="NF010713">
    <property type="entry name" value="PRK14115.1"/>
    <property type="match status" value="1"/>
</dbReference>
<dbReference type="PANTHER" id="PTHR11931">
    <property type="entry name" value="PHOSPHOGLYCERATE MUTASE"/>
    <property type="match status" value="1"/>
</dbReference>
<dbReference type="Pfam" id="PF00300">
    <property type="entry name" value="His_Phos_1"/>
    <property type="match status" value="2"/>
</dbReference>
<dbReference type="PIRSF" id="PIRSF000709">
    <property type="entry name" value="6PFK_2-Ptase"/>
    <property type="match status" value="1"/>
</dbReference>
<dbReference type="SMART" id="SM00855">
    <property type="entry name" value="PGAM"/>
    <property type="match status" value="1"/>
</dbReference>
<dbReference type="SUPFAM" id="SSF53254">
    <property type="entry name" value="Phosphoglycerate mutase-like"/>
    <property type="match status" value="1"/>
</dbReference>
<dbReference type="PROSITE" id="PS00175">
    <property type="entry name" value="PG_MUTASE"/>
    <property type="match status" value="1"/>
</dbReference>
<evidence type="ECO:0000255" key="1">
    <source>
        <dbReference type="HAMAP-Rule" id="MF_01039"/>
    </source>
</evidence>
<comment type="function">
    <text evidence="1">Catalyzes the interconversion of 2-phosphoglycerate and 3-phosphoglycerate.</text>
</comment>
<comment type="catalytic activity">
    <reaction evidence="1">
        <text>(2R)-2-phosphoglycerate = (2R)-3-phosphoglycerate</text>
        <dbReference type="Rhea" id="RHEA:15901"/>
        <dbReference type="ChEBI" id="CHEBI:58272"/>
        <dbReference type="ChEBI" id="CHEBI:58289"/>
        <dbReference type="EC" id="5.4.2.11"/>
    </reaction>
</comment>
<comment type="pathway">
    <text evidence="1">Carbohydrate degradation; glycolysis; pyruvate from D-glyceraldehyde 3-phosphate: step 3/5.</text>
</comment>
<comment type="subunit">
    <text evidence="1">Homodimer.</text>
</comment>
<comment type="similarity">
    <text evidence="1">Belongs to the phosphoglycerate mutase family. BPG-dependent PGAM subfamily.</text>
</comment>
<sequence length="248" mass="27980">MYKLVLIRHGESTWNKENRFTGWVDVDLTEQGNLEAQQAGTLLKDSGYMFDIAYTSVLKRAIRTLWHVQDKMDLMYLPVVHSWRLNERHYGALSGLNKAETAARFGDEQVLVWRRSYDTPPPALEPTDSRTSYDDPRYAKVPREELPLTECLKDTVARVMPIWNESIAPAIKSGRKVLIAAHGNSIRALVKYLDNISDSDIVGLNIPNGVPLVYELDENLKPIKHYYLGDQEAIAKAQAAVAKQGKAG</sequence>
<organism>
    <name type="scientific">Paraburkholderia phymatum (strain DSM 17167 / CIP 108236 / LMG 21445 / STM815)</name>
    <name type="common">Burkholderia phymatum</name>
    <dbReference type="NCBI Taxonomy" id="391038"/>
    <lineage>
        <taxon>Bacteria</taxon>
        <taxon>Pseudomonadati</taxon>
        <taxon>Pseudomonadota</taxon>
        <taxon>Betaproteobacteria</taxon>
        <taxon>Burkholderiales</taxon>
        <taxon>Burkholderiaceae</taxon>
        <taxon>Paraburkholderia</taxon>
    </lineage>
</organism>
<proteinExistence type="inferred from homology"/>
<name>GPMA_PARP8</name>
<feature type="chain" id="PRO_1000135930" description="2,3-bisphosphoglycerate-dependent phosphoglycerate mutase">
    <location>
        <begin position="1"/>
        <end position="248"/>
    </location>
</feature>
<feature type="active site" description="Tele-phosphohistidine intermediate" evidence="1">
    <location>
        <position position="9"/>
    </location>
</feature>
<feature type="active site" description="Proton donor/acceptor" evidence="1">
    <location>
        <position position="87"/>
    </location>
</feature>
<feature type="binding site" evidence="1">
    <location>
        <begin position="8"/>
        <end position="15"/>
    </location>
    <ligand>
        <name>substrate</name>
    </ligand>
</feature>
<feature type="binding site" evidence="1">
    <location>
        <begin position="21"/>
        <end position="22"/>
    </location>
    <ligand>
        <name>substrate</name>
    </ligand>
</feature>
<feature type="binding site" evidence="1">
    <location>
        <position position="60"/>
    </location>
    <ligand>
        <name>substrate</name>
    </ligand>
</feature>
<feature type="binding site" evidence="1">
    <location>
        <begin position="87"/>
        <end position="90"/>
    </location>
    <ligand>
        <name>substrate</name>
    </ligand>
</feature>
<feature type="binding site" evidence="1">
    <location>
        <position position="98"/>
    </location>
    <ligand>
        <name>substrate</name>
    </ligand>
</feature>
<feature type="binding site" evidence="1">
    <location>
        <begin position="114"/>
        <end position="115"/>
    </location>
    <ligand>
        <name>substrate</name>
    </ligand>
</feature>
<feature type="binding site" evidence="1">
    <location>
        <begin position="183"/>
        <end position="184"/>
    </location>
    <ligand>
        <name>substrate</name>
    </ligand>
</feature>
<feature type="site" description="Transition state stabilizer" evidence="1">
    <location>
        <position position="182"/>
    </location>
</feature>
<accession>B2JC95</accession>
<gene>
    <name evidence="1" type="primary">gpmA</name>
    <name type="ordered locus">Bphy_0266</name>
</gene>
<reference key="1">
    <citation type="journal article" date="2014" name="Stand. Genomic Sci.">
        <title>Complete genome sequence of Burkholderia phymatum STM815(T), a broad host range and efficient nitrogen-fixing symbiont of Mimosa species.</title>
        <authorList>
            <person name="Moulin L."/>
            <person name="Klonowska A."/>
            <person name="Caroline B."/>
            <person name="Booth K."/>
            <person name="Vriezen J.A."/>
            <person name="Melkonian R."/>
            <person name="James E.K."/>
            <person name="Young J.P."/>
            <person name="Bena G."/>
            <person name="Hauser L."/>
            <person name="Land M."/>
            <person name="Kyrpides N."/>
            <person name="Bruce D."/>
            <person name="Chain P."/>
            <person name="Copeland A."/>
            <person name="Pitluck S."/>
            <person name="Woyke T."/>
            <person name="Lizotte-Waniewski M."/>
            <person name="Bristow J."/>
            <person name="Riley M."/>
        </authorList>
    </citation>
    <scope>NUCLEOTIDE SEQUENCE [LARGE SCALE GENOMIC DNA]</scope>
    <source>
        <strain>DSM 17167 / CIP 108236 / LMG 21445 / STM815</strain>
    </source>
</reference>
<keyword id="KW-0312">Gluconeogenesis</keyword>
<keyword id="KW-0324">Glycolysis</keyword>
<keyword id="KW-0413">Isomerase</keyword>
<keyword id="KW-1185">Reference proteome</keyword>
<protein>
    <recommendedName>
        <fullName evidence="1">2,3-bisphosphoglycerate-dependent phosphoglycerate mutase</fullName>
        <shortName evidence="1">BPG-dependent PGAM</shortName>
        <shortName evidence="1">PGAM</shortName>
        <shortName evidence="1">Phosphoglyceromutase</shortName>
        <shortName evidence="1">dPGM</shortName>
        <ecNumber evidence="1">5.4.2.11</ecNumber>
    </recommendedName>
</protein>